<name>DMRT1_PIG</name>
<proteinExistence type="evidence at transcript level"/>
<sequence>MPNDDAYSKPSAPSEAPHAPGPPPQGKAGGFSKALLGTSGGGGSGGSSGGGSGASGMSAASNKKSPRLPKCARCRNHGYASPLKGHKRFCMWRDCQCKKCNLIAERQRVMAAQVALRRQQAQEEELGISHPIPLPSAAELLVKRENHGSNPCLMTESSSSSQPPPPPPAASTPTTAAPEGRMVIQDIPAVTSRGHVENAPDLVSDSTYYSSFYQPSLFPYYNNLYNYPQYSMALAADSSSGDVGNALGGSPVKNSLRGLPAPYVPGQTGNQWQMKNSETRHAVSSQYRMHSYYPPPSYLGQSVSQIFTFEDGPSYSEAKASVLSPPSSQDSGLVSLSSSSPISNESTKGVLECESASEPSSFPVTPVIEERTK</sequence>
<gene>
    <name type="primary">DMRT1</name>
</gene>
<organism>
    <name type="scientific">Sus scrofa</name>
    <name type="common">Pig</name>
    <dbReference type="NCBI Taxonomy" id="9823"/>
    <lineage>
        <taxon>Eukaryota</taxon>
        <taxon>Metazoa</taxon>
        <taxon>Chordata</taxon>
        <taxon>Craniata</taxon>
        <taxon>Vertebrata</taxon>
        <taxon>Euteleostomi</taxon>
        <taxon>Mammalia</taxon>
        <taxon>Eutheria</taxon>
        <taxon>Laurasiatheria</taxon>
        <taxon>Artiodactyla</taxon>
        <taxon>Suina</taxon>
        <taxon>Suidae</taxon>
        <taxon>Sus</taxon>
    </lineage>
</organism>
<dbReference type="EMBL" id="AF216651">
    <property type="protein sequence ID" value="AAF24509.1"/>
    <property type="molecule type" value="mRNA"/>
</dbReference>
<dbReference type="RefSeq" id="NP_999276.1">
    <property type="nucleotide sequence ID" value="NM_214111.1"/>
</dbReference>
<dbReference type="SMR" id="Q9TT01"/>
<dbReference type="FunCoup" id="Q9TT01">
    <property type="interactions" value="211"/>
</dbReference>
<dbReference type="STRING" id="9823.ENSSSCP00000067348"/>
<dbReference type="PaxDb" id="9823-ENSSSCP00000005629"/>
<dbReference type="GeneID" id="397199"/>
<dbReference type="KEGG" id="ssc:397199"/>
<dbReference type="CTD" id="1761"/>
<dbReference type="eggNOG" id="KOG3815">
    <property type="taxonomic scope" value="Eukaryota"/>
</dbReference>
<dbReference type="InParanoid" id="Q9TT01"/>
<dbReference type="OrthoDB" id="9946337at2759"/>
<dbReference type="Proteomes" id="UP000008227">
    <property type="component" value="Unplaced"/>
</dbReference>
<dbReference type="Proteomes" id="UP000314985">
    <property type="component" value="Unplaced"/>
</dbReference>
<dbReference type="Proteomes" id="UP000694570">
    <property type="component" value="Unplaced"/>
</dbReference>
<dbReference type="Proteomes" id="UP000694571">
    <property type="component" value="Unplaced"/>
</dbReference>
<dbReference type="Proteomes" id="UP000694720">
    <property type="component" value="Unplaced"/>
</dbReference>
<dbReference type="Proteomes" id="UP000694722">
    <property type="component" value="Unplaced"/>
</dbReference>
<dbReference type="Proteomes" id="UP000694723">
    <property type="component" value="Unplaced"/>
</dbReference>
<dbReference type="Proteomes" id="UP000694724">
    <property type="component" value="Unplaced"/>
</dbReference>
<dbReference type="Proteomes" id="UP000694725">
    <property type="component" value="Unplaced"/>
</dbReference>
<dbReference type="Proteomes" id="UP000694726">
    <property type="component" value="Unplaced"/>
</dbReference>
<dbReference type="Proteomes" id="UP000694727">
    <property type="component" value="Unplaced"/>
</dbReference>
<dbReference type="Proteomes" id="UP000694728">
    <property type="component" value="Unplaced"/>
</dbReference>
<dbReference type="GO" id="GO:0005634">
    <property type="term" value="C:nucleus"/>
    <property type="evidence" value="ECO:0000250"/>
    <property type="project" value="UniProtKB"/>
</dbReference>
<dbReference type="GO" id="GO:0000987">
    <property type="term" value="F:cis-regulatory region sequence-specific DNA binding"/>
    <property type="evidence" value="ECO:0000250"/>
    <property type="project" value="UniProtKB"/>
</dbReference>
<dbReference type="GO" id="GO:0000981">
    <property type="term" value="F:DNA-binding transcription factor activity, RNA polymerase II-specific"/>
    <property type="evidence" value="ECO:0000318"/>
    <property type="project" value="GO_Central"/>
</dbReference>
<dbReference type="GO" id="GO:0046872">
    <property type="term" value="F:metal ion binding"/>
    <property type="evidence" value="ECO:0007669"/>
    <property type="project" value="UniProtKB-KW"/>
</dbReference>
<dbReference type="GO" id="GO:0000978">
    <property type="term" value="F:RNA polymerase II cis-regulatory region sequence-specific DNA binding"/>
    <property type="evidence" value="ECO:0000318"/>
    <property type="project" value="GO_Central"/>
</dbReference>
<dbReference type="GO" id="GO:0002176">
    <property type="term" value="P:male germ cell proliferation"/>
    <property type="evidence" value="ECO:0000250"/>
    <property type="project" value="UniProtKB"/>
</dbReference>
<dbReference type="GO" id="GO:0030238">
    <property type="term" value="P:male sex determination"/>
    <property type="evidence" value="ECO:0000250"/>
    <property type="project" value="UniProtKB"/>
</dbReference>
<dbReference type="GO" id="GO:0046661">
    <property type="term" value="P:male sex differentiation"/>
    <property type="evidence" value="ECO:0000250"/>
    <property type="project" value="UniProtKB"/>
</dbReference>
<dbReference type="GO" id="GO:0045835">
    <property type="term" value="P:negative regulation of meiotic nuclear division"/>
    <property type="evidence" value="ECO:0000250"/>
    <property type="project" value="UniProtKB"/>
</dbReference>
<dbReference type="GO" id="GO:0000122">
    <property type="term" value="P:negative regulation of transcription by RNA polymerase II"/>
    <property type="evidence" value="ECO:0000250"/>
    <property type="project" value="UniProtKB"/>
</dbReference>
<dbReference type="GO" id="GO:0045840">
    <property type="term" value="P:positive regulation of mitotic nuclear division"/>
    <property type="evidence" value="ECO:0000250"/>
    <property type="project" value="UniProtKB"/>
</dbReference>
<dbReference type="GO" id="GO:0045944">
    <property type="term" value="P:positive regulation of transcription by RNA polymerase II"/>
    <property type="evidence" value="ECO:0000250"/>
    <property type="project" value="UniProtKB"/>
</dbReference>
<dbReference type="GO" id="GO:0006357">
    <property type="term" value="P:regulation of transcription by RNA polymerase II"/>
    <property type="evidence" value="ECO:0000318"/>
    <property type="project" value="GO_Central"/>
</dbReference>
<dbReference type="GO" id="GO:0060008">
    <property type="term" value="P:Sertoli cell differentiation"/>
    <property type="evidence" value="ECO:0000250"/>
    <property type="project" value="UniProtKB"/>
</dbReference>
<dbReference type="GO" id="GO:0007548">
    <property type="term" value="P:sex differentiation"/>
    <property type="evidence" value="ECO:0000318"/>
    <property type="project" value="GO_Central"/>
</dbReference>
<dbReference type="FunFam" id="4.10.1040.10:FF:000001">
    <property type="entry name" value="doublesex- and mab-3-related transcription factor 1"/>
    <property type="match status" value="1"/>
</dbReference>
<dbReference type="Gene3D" id="4.10.1040.10">
    <property type="entry name" value="DM DNA-binding domain"/>
    <property type="match status" value="1"/>
</dbReference>
<dbReference type="InterPro" id="IPR001275">
    <property type="entry name" value="DM_DNA-bd"/>
</dbReference>
<dbReference type="InterPro" id="IPR036407">
    <property type="entry name" value="DM_DNA-bd_sf"/>
</dbReference>
<dbReference type="InterPro" id="IPR026607">
    <property type="entry name" value="DMRT"/>
</dbReference>
<dbReference type="InterPro" id="IPR022114">
    <property type="entry name" value="DMRT1-like"/>
</dbReference>
<dbReference type="PANTHER" id="PTHR12322">
    <property type="entry name" value="DOUBLESEX AND MAB-3 RELATED TRANSCRIPTION FACTOR DMRT"/>
    <property type="match status" value="1"/>
</dbReference>
<dbReference type="PANTHER" id="PTHR12322:SF70">
    <property type="entry name" value="DOUBLESEX- AND MAB-3-RELATED TRANSCRIPTION FACTOR 1"/>
    <property type="match status" value="1"/>
</dbReference>
<dbReference type="Pfam" id="PF00751">
    <property type="entry name" value="DM"/>
    <property type="match status" value="1"/>
</dbReference>
<dbReference type="Pfam" id="PF12374">
    <property type="entry name" value="Dmrt1"/>
    <property type="match status" value="1"/>
</dbReference>
<dbReference type="SMART" id="SM00301">
    <property type="entry name" value="DM"/>
    <property type="match status" value="1"/>
</dbReference>
<dbReference type="SUPFAM" id="SSF82927">
    <property type="entry name" value="Cysteine-rich DNA binding domain, (DM domain)"/>
    <property type="match status" value="1"/>
</dbReference>
<dbReference type="PROSITE" id="PS40000">
    <property type="entry name" value="DM_1"/>
    <property type="match status" value="1"/>
</dbReference>
<dbReference type="PROSITE" id="PS50809">
    <property type="entry name" value="DM_2"/>
    <property type="match status" value="1"/>
</dbReference>
<evidence type="ECO:0000250" key="1"/>
<evidence type="ECO:0000250" key="2">
    <source>
        <dbReference type="UniProtKB" id="Q9QZ59"/>
    </source>
</evidence>
<evidence type="ECO:0000255" key="3">
    <source>
        <dbReference type="PROSITE-ProRule" id="PRU00070"/>
    </source>
</evidence>
<evidence type="ECO:0000256" key="4">
    <source>
        <dbReference type="SAM" id="MobiDB-lite"/>
    </source>
</evidence>
<evidence type="ECO:0000305" key="5"/>
<reference key="1">
    <citation type="submission" date="1999-12" db="EMBL/GenBank/DDBJ databases">
        <authorList>
            <person name="Dornan S.C."/>
            <person name="Daneau I."/>
            <person name="Lussier J.G."/>
            <person name="Silversides D.W."/>
        </authorList>
    </citation>
    <scope>NUCLEOTIDE SEQUENCE [MRNA]</scope>
</reference>
<feature type="chain" id="PRO_0000207044" description="Doublesex- and mab-3-related transcription factor 1">
    <location>
        <begin position="1"/>
        <end position="373"/>
    </location>
</feature>
<feature type="DNA-binding region" description="DM" evidence="3">
    <location>
        <begin position="67"/>
        <end position="113"/>
    </location>
</feature>
<feature type="region of interest" description="Disordered" evidence="4">
    <location>
        <begin position="1"/>
        <end position="72"/>
    </location>
</feature>
<feature type="region of interest" description="Disordered" evidence="4">
    <location>
        <begin position="148"/>
        <end position="179"/>
    </location>
</feature>
<feature type="region of interest" description="Disordered" evidence="4">
    <location>
        <begin position="316"/>
        <end position="373"/>
    </location>
</feature>
<feature type="compositionally biased region" description="Low complexity" evidence="4">
    <location>
        <begin position="8"/>
        <end position="18"/>
    </location>
</feature>
<feature type="compositionally biased region" description="Gly residues" evidence="4">
    <location>
        <begin position="38"/>
        <end position="54"/>
    </location>
</feature>
<feature type="compositionally biased region" description="Low complexity" evidence="4">
    <location>
        <begin position="327"/>
        <end position="346"/>
    </location>
</feature>
<feature type="modified residue" description="Phosphoserine" evidence="2">
    <location>
        <position position="338"/>
    </location>
</feature>
<accession>Q9TT01</accession>
<comment type="function">
    <text evidence="1">Transcription factor that plays a key role in male sex determination and differentiation by controlling testis development and male germ cell proliferation. Plays a central role in spermatogonia by inhibiting meiosis in undifferentiated spermatogonia and promoting mitosis, leading to spermatogonial development and allowing abundant and continuous production of sperm. Acts both as a transcription repressor and activator: prevents meiosis by restricting retinoic acid (RA)-dependent transcription and repressing STRA8 expression and promotes spermatogonial development by activating spermatogonial differentiation genes, such as SOHLH1. Also plays a key role in postnatal sex maintenance by maintaining testis determination and preventing feminization: represses transcription of female promoting genes such as FOXL2 and activates male-specific genes. May act as a tumor suppressor. May also play a minor role in oogenesis (By similarity).</text>
</comment>
<comment type="subcellular location">
    <subcellularLocation>
        <location evidence="3">Nucleus</location>
    </subcellularLocation>
</comment>
<comment type="similarity">
    <text evidence="5">Belongs to the DMRT family.</text>
</comment>
<keyword id="KW-0010">Activator</keyword>
<keyword id="KW-0217">Developmental protein</keyword>
<keyword id="KW-0221">Differentiation</keyword>
<keyword id="KW-0238">DNA-binding</keyword>
<keyword id="KW-0479">Metal-binding</keyword>
<keyword id="KW-0539">Nucleus</keyword>
<keyword id="KW-0597">Phosphoprotein</keyword>
<keyword id="KW-1185">Reference proteome</keyword>
<keyword id="KW-0678">Repressor</keyword>
<keyword id="KW-0726">Sexual differentiation</keyword>
<keyword id="KW-0804">Transcription</keyword>
<keyword id="KW-0805">Transcription regulation</keyword>
<keyword id="KW-0043">Tumor suppressor</keyword>
<keyword id="KW-0862">Zinc</keyword>
<protein>
    <recommendedName>
        <fullName>Doublesex- and mab-3-related transcription factor 1</fullName>
    </recommendedName>
</protein>